<proteinExistence type="evidence at protein level"/>
<name>DIS_PROJR</name>
<comment type="function">
    <text evidence="3 4">Recombinant protein inhibits the adhesion of alpha-1/beta-1-K562 (ITGA1/ITGB1) cells to collagen IV with an IC(50) of 80 nM.</text>
</comment>
<comment type="subunit">
    <text evidence="1">Monomer.</text>
</comment>
<comment type="subcellular location">
    <subcellularLocation>
        <location evidence="8">Secreted</location>
    </subcellularLocation>
</comment>
<comment type="tissue specificity">
    <text evidence="9">Expressed by the venom gland.</text>
</comment>
<comment type="PTM">
    <text evidence="3">Two conformers are found, they may differ by their disulfide bond connectivities. Conformer 2 is 33 times less active than conformer 1. Conformer 2 may represent a non-native protein (PubMed:16215260).</text>
</comment>
<comment type="PTM">
    <text>The C-terminal dipeptide may be post-translationally removed, as seen in disintegrins that possess a KTS integrin-binding motif.</text>
</comment>
<comment type="miscellaneous">
    <text evidence="8">Negative results: does not show inhibitory activity toward alpha-IIb/beta-3 (ITGA2B/ITGB3), alpha-V/beta-3 (ITGAV/ITGB3), alpha-2/beta-1 (ITGA2/ITGB1), alpha-5/beta-1 (ITGA5/ITGB1), alpha-4/beta-1 (ITGA4/ITGB1), alpha-6/beta-1 (ITGA6/ITGB1), and alpha-9/beta-1 (ITGA9/ITGB1).</text>
</comment>
<comment type="similarity">
    <text evidence="7">Belongs to the disintegrin family. Short disintegrin subfamily.</text>
</comment>
<comment type="caution">
    <text evidence="7">The mature sequence shown is shorter than the sequence proposed in PubMed:16215260 and PubMed:21656569. A comparison of jerdostatin with KTS-disintegrins and a higher potency (IC(50) of 80 nM compared to 180 nM) suggest that the C-terminal dipeptide is post-translationally removed.</text>
</comment>
<sequence>MIQVLLVTICLAVFPYQVSSKTLKSGSVNEYEVVNPGTVTGLPKGAVKQPEKKHEPMKGNTLQKLPLCTTGPCCRQCKLKPAGTTCWRTSVSSHYCTGRSCECPSYPGNG</sequence>
<feature type="signal peptide" evidence="2">
    <location>
        <begin position="1"/>
        <end position="20"/>
    </location>
</feature>
<feature type="propeptide" id="PRO_0000322603" evidence="1">
    <location>
        <begin position="21"/>
        <end position="67"/>
    </location>
</feature>
<feature type="chain" id="PRO_0000007246" description="Disintegrin jerdostatin" evidence="8 9">
    <location>
        <begin position="68"/>
        <end position="110"/>
    </location>
</feature>
<feature type="domain" description="Disintegrin">
    <location>
        <begin position="27"/>
        <end position="110"/>
    </location>
</feature>
<feature type="short sequence motif" description="Cell attachment site; atypical (RTS)">
    <location>
        <begin position="88"/>
        <end position="90"/>
    </location>
</feature>
<feature type="disulfide bond" evidence="4 10 11 12 13">
    <location>
        <begin position="68"/>
        <end position="77"/>
    </location>
</feature>
<feature type="disulfide bond" evidence="4 10 11 12 13">
    <location>
        <begin position="73"/>
        <end position="96"/>
    </location>
</feature>
<feature type="disulfide bond" evidence="4 10 11 12 13">
    <location>
        <begin position="74"/>
        <end position="101"/>
    </location>
</feature>
<feature type="disulfide bond" evidence="4 10 11 12 13">
    <location>
        <begin position="86"/>
        <end position="103"/>
    </location>
</feature>
<feature type="mutagenesis site" description="Decrease in inhibitory activity towards ITGA1/ITGB1 integrin (IC(50) is 300 nM). Decrease in inhibitory activity towards ITGA1/ITGB1 integrin (IC(50) of 703 nM) (IC(50) is 703 nM); when associated with G-108." evidence="3 4">
    <original>R</original>
    <variation>K</variation>
    <location>
        <position position="88"/>
    </location>
</feature>
<feature type="mutagenesis site" description="Decrease in inhibitory activity towards ITGA1/ITGB1 integrin (IC(50) is 180 nM). Decrease in inhibitory activity towards ITGA1/ITGB1 integrin (IC(50) is 703 nM); when associated with R-88." evidence="4">
    <original>G</original>
    <variation>GNG</variation>
    <location>
        <position position="108"/>
    </location>
</feature>
<feature type="strand" evidence="14">
    <location>
        <begin position="71"/>
        <end position="77"/>
    </location>
</feature>
<feature type="strand" evidence="14">
    <location>
        <begin position="85"/>
        <end position="87"/>
    </location>
</feature>
<feature type="strand" evidence="14">
    <location>
        <begin position="89"/>
        <end position="91"/>
    </location>
</feature>
<feature type="strand" evidence="15">
    <location>
        <begin position="92"/>
        <end position="95"/>
    </location>
</feature>
<keyword id="KW-0002">3D-structure</keyword>
<keyword id="KW-1217">Cell adhesion impairing toxin</keyword>
<keyword id="KW-1015">Disulfide bond</keyword>
<keyword id="KW-0964">Secreted</keyword>
<keyword id="KW-0732">Signal</keyword>
<keyword id="KW-0800">Toxin</keyword>
<protein>
    <recommendedName>
        <fullName evidence="5 6">Disintegrin jerdostatin</fullName>
    </recommendedName>
</protein>
<reference key="1">
    <citation type="journal article" date="2005" name="J. Biol. Chem.">
        <title>cDNA cloning and functional expression of jerdostatin, a novel RTS-disintegrin from Trimeresurus jerdonii and a specific antagonist of the alpha1beta1 integrin.</title>
        <authorList>
            <person name="Sanz L."/>
            <person name="Chen R.-Q."/>
            <person name="Perez A."/>
            <person name="Hilario R."/>
            <person name="Juarez P."/>
            <person name="Marcinkiewicz C."/>
            <person name="Monleon D."/>
            <person name="Celda B."/>
            <person name="Xiong Y.-L."/>
            <person name="Perez-Paya E."/>
            <person name="Calvete J.J."/>
        </authorList>
    </citation>
    <scope>NUCLEOTIDE SEQUENCE [MRNA]</scope>
    <scope>FUNCTION</scope>
    <scope>SYNTHESIS OF 68-110</scope>
    <scope>MUTAGENESIS OF ARG-88</scope>
    <source>
        <tissue>Venom gland</tissue>
    </source>
</reference>
<reference key="2">
    <citation type="journal article" date="2011" name="Proteins">
        <title>NMR structure and dynamics of recombinant wild type and mutated jerdostatin, a selective inhibitor of integrin alpha1beta1.</title>
        <authorList>
            <person name="Carbajo R.J."/>
            <person name="Sanz L."/>
            <person name="Mosulen S."/>
            <person name="Perez A."/>
            <person name="Marcinkiewicz C."/>
            <person name="Pineda-Lucena A."/>
            <person name="Calvete J.J."/>
        </authorList>
    </citation>
    <scope>STRUCTURE BY NMR OF 68-110</scope>
    <scope>FUNCTION</scope>
    <scope>DISULFIDE BONDS</scope>
    <scope>MUTAGENESIS OF ARG-88 AND GLY-108</scope>
</reference>
<dbReference type="EMBL" id="AY262730">
    <property type="protein sequence ID" value="AAP20878.1"/>
    <property type="molecule type" value="mRNA"/>
</dbReference>
<dbReference type="PDB" id="2W9O">
    <property type="method" value="NMR"/>
    <property type="chains" value="A=68-110"/>
</dbReference>
<dbReference type="PDB" id="2W9U">
    <property type="method" value="NMR"/>
    <property type="chains" value="A=68-110"/>
</dbReference>
<dbReference type="PDB" id="2W9V">
    <property type="method" value="NMR"/>
    <property type="chains" value="A=68-108"/>
</dbReference>
<dbReference type="PDB" id="2W9W">
    <property type="method" value="NMR"/>
    <property type="chains" value="A=68-108"/>
</dbReference>
<dbReference type="PDBsum" id="2W9O"/>
<dbReference type="PDBsum" id="2W9U"/>
<dbReference type="PDBsum" id="2W9V"/>
<dbReference type="PDBsum" id="2W9W"/>
<dbReference type="BMRB" id="Q7ZZM2"/>
<dbReference type="SMR" id="Q7ZZM2"/>
<dbReference type="EvolutionaryTrace" id="Q7ZZM2"/>
<dbReference type="GO" id="GO:0005576">
    <property type="term" value="C:extracellular region"/>
    <property type="evidence" value="ECO:0007669"/>
    <property type="project" value="UniProtKB-SubCell"/>
</dbReference>
<dbReference type="GO" id="GO:0090729">
    <property type="term" value="F:toxin activity"/>
    <property type="evidence" value="ECO:0007669"/>
    <property type="project" value="UniProtKB-KW"/>
</dbReference>
<dbReference type="Gene3D" id="4.10.70.10">
    <property type="entry name" value="Disintegrin domain"/>
    <property type="match status" value="1"/>
</dbReference>
<dbReference type="InterPro" id="IPR036436">
    <property type="entry name" value="Disintegrin_dom_sf"/>
</dbReference>
<dbReference type="SUPFAM" id="SSF57552">
    <property type="entry name" value="Blood coagulation inhibitor (disintegrin)"/>
    <property type="match status" value="1"/>
</dbReference>
<evidence type="ECO:0000250" key="1"/>
<evidence type="ECO:0000255" key="2"/>
<evidence type="ECO:0000269" key="3">
    <source>
    </source>
</evidence>
<evidence type="ECO:0000269" key="4">
    <source>
    </source>
</evidence>
<evidence type="ECO:0000303" key="5">
    <source>
    </source>
</evidence>
<evidence type="ECO:0000303" key="6">
    <source>
    </source>
</evidence>
<evidence type="ECO:0000305" key="7"/>
<evidence type="ECO:0000305" key="8">
    <source>
    </source>
</evidence>
<evidence type="ECO:0000305" key="9">
    <source>
    </source>
</evidence>
<evidence type="ECO:0007744" key="10">
    <source>
        <dbReference type="PDB" id="2W9O"/>
    </source>
</evidence>
<evidence type="ECO:0007744" key="11">
    <source>
        <dbReference type="PDB" id="2W9U"/>
    </source>
</evidence>
<evidence type="ECO:0007744" key="12">
    <source>
        <dbReference type="PDB" id="2W9V"/>
    </source>
</evidence>
<evidence type="ECO:0007744" key="13">
    <source>
        <dbReference type="PDB" id="2W9W"/>
    </source>
</evidence>
<evidence type="ECO:0007829" key="14">
    <source>
        <dbReference type="PDB" id="2W9O"/>
    </source>
</evidence>
<evidence type="ECO:0007829" key="15">
    <source>
        <dbReference type="PDB" id="2W9V"/>
    </source>
</evidence>
<organism>
    <name type="scientific">Protobothrops jerdonii</name>
    <name type="common">Jerdon's pitviper</name>
    <name type="synonym">Trimeresurus jerdonii</name>
    <dbReference type="NCBI Taxonomy" id="242841"/>
    <lineage>
        <taxon>Eukaryota</taxon>
        <taxon>Metazoa</taxon>
        <taxon>Chordata</taxon>
        <taxon>Craniata</taxon>
        <taxon>Vertebrata</taxon>
        <taxon>Euteleostomi</taxon>
        <taxon>Lepidosauria</taxon>
        <taxon>Squamata</taxon>
        <taxon>Bifurcata</taxon>
        <taxon>Unidentata</taxon>
        <taxon>Episquamata</taxon>
        <taxon>Toxicofera</taxon>
        <taxon>Serpentes</taxon>
        <taxon>Colubroidea</taxon>
        <taxon>Viperidae</taxon>
        <taxon>Crotalinae</taxon>
        <taxon>Protobothrops</taxon>
    </lineage>
</organism>
<accession>Q7ZZM2</accession>